<feature type="chain" id="PRO_0000163959" description="tRNA dimethylallyltransferase">
    <location>
        <begin position="1"/>
        <end position="323"/>
    </location>
</feature>
<feature type="region of interest" description="Interaction with substrate tRNA" evidence="1">
    <location>
        <begin position="37"/>
        <end position="40"/>
    </location>
</feature>
<feature type="region of interest" description="Interaction with substrate tRNA" evidence="1">
    <location>
        <begin position="161"/>
        <end position="165"/>
    </location>
</feature>
<feature type="binding site" evidence="1">
    <location>
        <begin position="12"/>
        <end position="19"/>
    </location>
    <ligand>
        <name>ATP</name>
        <dbReference type="ChEBI" id="CHEBI:30616"/>
    </ligand>
</feature>
<feature type="binding site" evidence="1">
    <location>
        <begin position="14"/>
        <end position="19"/>
    </location>
    <ligand>
        <name>substrate</name>
    </ligand>
</feature>
<feature type="site" description="Interaction with substrate tRNA" evidence="1">
    <location>
        <position position="103"/>
    </location>
</feature>
<feature type="site" description="Interaction with substrate tRNA" evidence="1">
    <location>
        <position position="125"/>
    </location>
</feature>
<sequence>MNALPPAIFLMGPTAAGKTDLAIELSKVLPCELISVDSALVYRGMDIGTAKPSKAQLAEFPHRLIDILDPAQSYSAADFRSDALAAMAQITARGNIPLLVGGTMLYFKALLDGLADMPAANAAVRAQLEADAQAFGWQSLHDQLAVVDPVSAARIHPNDPQRLIRALEVYRVSGMSMTAHREQQTAQSTEAAASGCQQLPYTVANLAIAPADRKVLHQRIALRFEQMLDQGFLDEVLALRSRGDLHAGLPSIRAVGYRQVWDHLDGKLTREEMQERGIIATRQLAKRQFTWLRSWDDLHWLDSLASDNLSRALKYLGSVSILS</sequence>
<proteinExistence type="inferred from homology"/>
<protein>
    <recommendedName>
        <fullName evidence="1">tRNA dimethylallyltransferase</fullName>
        <ecNumber evidence="1">2.5.1.75</ecNumber>
    </recommendedName>
    <alternativeName>
        <fullName evidence="1">Dimethylallyl diphosphate:tRNA dimethylallyltransferase</fullName>
        <shortName evidence="1">DMAPP:tRNA dimethylallyltransferase</shortName>
        <shortName evidence="1">DMATase</shortName>
    </alternativeName>
    <alternativeName>
        <fullName evidence="1">Isopentenyl-diphosphate:tRNA isopentenyltransferase</fullName>
        <shortName evidence="1">IPP transferase</shortName>
        <shortName evidence="1">IPPT</shortName>
        <shortName evidence="1">IPTase</shortName>
    </alternativeName>
</protein>
<comment type="function">
    <text evidence="1">Catalyzes the transfer of a dimethylallyl group onto the adenine at position 37 in tRNAs that read codons beginning with uridine, leading to the formation of N6-(dimethylallyl)adenosine (i(6)A).</text>
</comment>
<comment type="catalytic activity">
    <reaction evidence="1">
        <text>adenosine(37) in tRNA + dimethylallyl diphosphate = N(6)-dimethylallyladenosine(37) in tRNA + diphosphate</text>
        <dbReference type="Rhea" id="RHEA:26482"/>
        <dbReference type="Rhea" id="RHEA-COMP:10162"/>
        <dbReference type="Rhea" id="RHEA-COMP:10375"/>
        <dbReference type="ChEBI" id="CHEBI:33019"/>
        <dbReference type="ChEBI" id="CHEBI:57623"/>
        <dbReference type="ChEBI" id="CHEBI:74411"/>
        <dbReference type="ChEBI" id="CHEBI:74415"/>
        <dbReference type="EC" id="2.5.1.75"/>
    </reaction>
</comment>
<comment type="cofactor">
    <cofactor evidence="1">
        <name>Mg(2+)</name>
        <dbReference type="ChEBI" id="CHEBI:18420"/>
    </cofactor>
</comment>
<comment type="subunit">
    <text evidence="1">Monomer.</text>
</comment>
<comment type="similarity">
    <text evidence="1">Belongs to the IPP transferase family.</text>
</comment>
<evidence type="ECO:0000255" key="1">
    <source>
        <dbReference type="HAMAP-Rule" id="MF_00185"/>
    </source>
</evidence>
<dbReference type="EC" id="2.5.1.75" evidence="1"/>
<dbReference type="EMBL" id="AE016853">
    <property type="protein sequence ID" value="AAO58371.1"/>
    <property type="molecule type" value="Genomic_DNA"/>
</dbReference>
<dbReference type="RefSeq" id="NP_794676.1">
    <property type="nucleotide sequence ID" value="NC_004578.1"/>
</dbReference>
<dbReference type="RefSeq" id="WP_011105239.1">
    <property type="nucleotide sequence ID" value="NC_004578.1"/>
</dbReference>
<dbReference type="SMR" id="Q87VJ3"/>
<dbReference type="STRING" id="223283.PSPTO_4943"/>
<dbReference type="GeneID" id="1186628"/>
<dbReference type="KEGG" id="pst:PSPTO_4943"/>
<dbReference type="PATRIC" id="fig|223283.9.peg.5057"/>
<dbReference type="eggNOG" id="COG0324">
    <property type="taxonomic scope" value="Bacteria"/>
</dbReference>
<dbReference type="HOGENOM" id="CLU_032616_0_0_6"/>
<dbReference type="OrthoDB" id="9776390at2"/>
<dbReference type="PhylomeDB" id="Q87VJ3"/>
<dbReference type="Proteomes" id="UP000002515">
    <property type="component" value="Chromosome"/>
</dbReference>
<dbReference type="GO" id="GO:0005524">
    <property type="term" value="F:ATP binding"/>
    <property type="evidence" value="ECO:0007669"/>
    <property type="project" value="UniProtKB-UniRule"/>
</dbReference>
<dbReference type="GO" id="GO:0052381">
    <property type="term" value="F:tRNA dimethylallyltransferase activity"/>
    <property type="evidence" value="ECO:0007669"/>
    <property type="project" value="UniProtKB-UniRule"/>
</dbReference>
<dbReference type="GO" id="GO:0006400">
    <property type="term" value="P:tRNA modification"/>
    <property type="evidence" value="ECO:0007669"/>
    <property type="project" value="TreeGrafter"/>
</dbReference>
<dbReference type="FunFam" id="1.10.20.140:FF:000001">
    <property type="entry name" value="tRNA dimethylallyltransferase"/>
    <property type="match status" value="1"/>
</dbReference>
<dbReference type="Gene3D" id="1.10.20.140">
    <property type="match status" value="1"/>
</dbReference>
<dbReference type="Gene3D" id="3.40.50.300">
    <property type="entry name" value="P-loop containing nucleotide triphosphate hydrolases"/>
    <property type="match status" value="1"/>
</dbReference>
<dbReference type="HAMAP" id="MF_00185">
    <property type="entry name" value="IPP_trans"/>
    <property type="match status" value="1"/>
</dbReference>
<dbReference type="InterPro" id="IPR039657">
    <property type="entry name" value="Dimethylallyltransferase"/>
</dbReference>
<dbReference type="InterPro" id="IPR018022">
    <property type="entry name" value="IPT"/>
</dbReference>
<dbReference type="InterPro" id="IPR027417">
    <property type="entry name" value="P-loop_NTPase"/>
</dbReference>
<dbReference type="NCBIfam" id="TIGR00174">
    <property type="entry name" value="miaA"/>
    <property type="match status" value="1"/>
</dbReference>
<dbReference type="PANTHER" id="PTHR11088">
    <property type="entry name" value="TRNA DIMETHYLALLYLTRANSFERASE"/>
    <property type="match status" value="1"/>
</dbReference>
<dbReference type="PANTHER" id="PTHR11088:SF60">
    <property type="entry name" value="TRNA DIMETHYLALLYLTRANSFERASE"/>
    <property type="match status" value="1"/>
</dbReference>
<dbReference type="Pfam" id="PF01715">
    <property type="entry name" value="IPPT"/>
    <property type="match status" value="1"/>
</dbReference>
<dbReference type="SUPFAM" id="SSF52540">
    <property type="entry name" value="P-loop containing nucleoside triphosphate hydrolases"/>
    <property type="match status" value="1"/>
</dbReference>
<reference key="1">
    <citation type="journal article" date="2003" name="Proc. Natl. Acad. Sci. U.S.A.">
        <title>The complete genome sequence of the Arabidopsis and tomato pathogen Pseudomonas syringae pv. tomato DC3000.</title>
        <authorList>
            <person name="Buell C.R."/>
            <person name="Joardar V."/>
            <person name="Lindeberg M."/>
            <person name="Selengut J."/>
            <person name="Paulsen I.T."/>
            <person name="Gwinn M.L."/>
            <person name="Dodson R.J."/>
            <person name="DeBoy R.T."/>
            <person name="Durkin A.S."/>
            <person name="Kolonay J.F."/>
            <person name="Madupu R."/>
            <person name="Daugherty S.C."/>
            <person name="Brinkac L.M."/>
            <person name="Beanan M.J."/>
            <person name="Haft D.H."/>
            <person name="Nelson W.C."/>
            <person name="Davidsen T.M."/>
            <person name="Zafar N."/>
            <person name="Zhou L."/>
            <person name="Liu J."/>
            <person name="Yuan Q."/>
            <person name="Khouri H.M."/>
            <person name="Fedorova N.B."/>
            <person name="Tran B."/>
            <person name="Russell D."/>
            <person name="Berry K.J."/>
            <person name="Utterback T.R."/>
            <person name="Van Aken S.E."/>
            <person name="Feldblyum T.V."/>
            <person name="D'Ascenzo M."/>
            <person name="Deng W.-L."/>
            <person name="Ramos A.R."/>
            <person name="Alfano J.R."/>
            <person name="Cartinhour S."/>
            <person name="Chatterjee A.K."/>
            <person name="Delaney T.P."/>
            <person name="Lazarowitz S.G."/>
            <person name="Martin G.B."/>
            <person name="Schneider D.J."/>
            <person name="Tang X."/>
            <person name="Bender C.L."/>
            <person name="White O."/>
            <person name="Fraser C.M."/>
            <person name="Collmer A."/>
        </authorList>
    </citation>
    <scope>NUCLEOTIDE SEQUENCE [LARGE SCALE GENOMIC DNA]</scope>
    <source>
        <strain>ATCC BAA-871 / DC3000</strain>
    </source>
</reference>
<name>MIAA_PSESM</name>
<gene>
    <name evidence="1" type="primary">miaA</name>
    <name type="ordered locus">PSPTO_4943</name>
</gene>
<keyword id="KW-0067">ATP-binding</keyword>
<keyword id="KW-0460">Magnesium</keyword>
<keyword id="KW-0547">Nucleotide-binding</keyword>
<keyword id="KW-1185">Reference proteome</keyword>
<keyword id="KW-0808">Transferase</keyword>
<keyword id="KW-0819">tRNA processing</keyword>
<accession>Q87VJ3</accession>
<organism>
    <name type="scientific">Pseudomonas syringae pv. tomato (strain ATCC BAA-871 / DC3000)</name>
    <dbReference type="NCBI Taxonomy" id="223283"/>
    <lineage>
        <taxon>Bacteria</taxon>
        <taxon>Pseudomonadati</taxon>
        <taxon>Pseudomonadota</taxon>
        <taxon>Gammaproteobacteria</taxon>
        <taxon>Pseudomonadales</taxon>
        <taxon>Pseudomonadaceae</taxon>
        <taxon>Pseudomonas</taxon>
    </lineage>
</organism>